<organism>
    <name type="scientific">Oryza sativa subsp. japonica</name>
    <name type="common">Rice</name>
    <dbReference type="NCBI Taxonomy" id="39947"/>
    <lineage>
        <taxon>Eukaryota</taxon>
        <taxon>Viridiplantae</taxon>
        <taxon>Streptophyta</taxon>
        <taxon>Embryophyta</taxon>
        <taxon>Tracheophyta</taxon>
        <taxon>Spermatophyta</taxon>
        <taxon>Magnoliopsida</taxon>
        <taxon>Liliopsida</taxon>
        <taxon>Poales</taxon>
        <taxon>Poaceae</taxon>
        <taxon>BOP clade</taxon>
        <taxon>Oryzoideae</taxon>
        <taxon>Oryzeae</taxon>
        <taxon>Oryzinae</taxon>
        <taxon>Oryza</taxon>
        <taxon>Oryza sativa</taxon>
    </lineage>
</organism>
<proteinExistence type="inferred from homology"/>
<feature type="chain" id="PRO_0000282467" description="Putative DEAD-box ATP-dependent RNA helicase 51">
    <location>
        <begin position="1"/>
        <end position="590"/>
    </location>
</feature>
<feature type="domain" description="Helicase ATP-binding" evidence="1">
    <location>
        <begin position="117"/>
        <end position="293"/>
    </location>
</feature>
<feature type="domain" description="Helicase C-terminal" evidence="2">
    <location>
        <begin position="329"/>
        <end position="481"/>
    </location>
</feature>
<feature type="region of interest" description="Disordered" evidence="3">
    <location>
        <begin position="1"/>
        <end position="81"/>
    </location>
</feature>
<feature type="region of interest" description="Disordered" evidence="3">
    <location>
        <begin position="549"/>
        <end position="590"/>
    </location>
</feature>
<feature type="short sequence motif" description="Q motif">
    <location>
        <begin position="86"/>
        <end position="114"/>
    </location>
</feature>
<feature type="short sequence motif" description="DEAD box">
    <location>
        <begin position="240"/>
        <end position="243"/>
    </location>
</feature>
<feature type="compositionally biased region" description="Polar residues" evidence="3">
    <location>
        <begin position="40"/>
        <end position="51"/>
    </location>
</feature>
<feature type="compositionally biased region" description="Basic and acidic residues" evidence="3">
    <location>
        <begin position="59"/>
        <end position="78"/>
    </location>
</feature>
<feature type="compositionally biased region" description="Basic residues" evidence="3">
    <location>
        <begin position="554"/>
        <end position="569"/>
    </location>
</feature>
<feature type="compositionally biased region" description="Basic and acidic residues" evidence="3">
    <location>
        <begin position="579"/>
        <end position="590"/>
    </location>
</feature>
<feature type="binding site" evidence="1">
    <location>
        <begin position="130"/>
        <end position="137"/>
    </location>
    <ligand>
        <name>ATP</name>
        <dbReference type="ChEBI" id="CHEBI:30616"/>
    </ligand>
</feature>
<evidence type="ECO:0000255" key="1">
    <source>
        <dbReference type="PROSITE-ProRule" id="PRU00541"/>
    </source>
</evidence>
<evidence type="ECO:0000255" key="2">
    <source>
        <dbReference type="PROSITE-ProRule" id="PRU00542"/>
    </source>
</evidence>
<evidence type="ECO:0000256" key="3">
    <source>
        <dbReference type="SAM" id="MobiDB-lite"/>
    </source>
</evidence>
<evidence type="ECO:0000305" key="4"/>
<keyword id="KW-0067">ATP-binding</keyword>
<keyword id="KW-0347">Helicase</keyword>
<keyword id="KW-0378">Hydrolase</keyword>
<keyword id="KW-0547">Nucleotide-binding</keyword>
<keyword id="KW-1185">Reference proteome</keyword>
<keyword id="KW-0694">RNA-binding</keyword>
<sequence length="590" mass="66568">MHPIKLCARSPRPSSKKRKRPAAAAATPPESEPEPVHNTAACNSEGENNATGKRREHNNKKMKEEKSKRKKKQGEGKKGSGILTDKLFSDLPISDLTANAIRDMNYTHLTEIQARSIPPLMLGSDVMASAKTGSGKTLAFLIPAIELLCRLRFSPRNGTGVIVLCPTRELAIQTHNVAKELMRYHSQTLGYVIGGIDLRGEAEQLAKGINVLVATPGRLLDHMQKTKSFKYECLKCLIIDEADRILEQNFEEQMKQIFKLLPRQGRQTVLFSATQTEKVEDFAKLTFGSKEERQRTLVYVGVDDHESKATVEGLKQGYCVIPSERRFLVLYAFLKKALSEKTKVMVFFSSCNSVKFHAQLLNFIQIECYDIHGQLKQHQRTSTFFKFHKAEHGILLCTNVAARGLDIPDVDYIVQYDPPDETKDYIHRVGRTARGDNGKGSAILFLLPKELQLLIHLKAANISVSEYVFRQELVPKLQPYLHYDSSFEQEKIVGGNYILNRSAKEAYKSYLLAYKSHSMKDIFAIHQLDLTSVAASFCFSEPPKVNLDLESSASKHRKKRNVNTGRRHGIGPSNPYGRKGSDDRRQFARF</sequence>
<accession>Q0DBS1</accession>
<accession>Q5Z5F6</accession>
<name>RH51_ORYSJ</name>
<dbReference type="EC" id="3.6.4.13"/>
<dbReference type="EMBL" id="AP005723">
    <property type="protein sequence ID" value="BAD54613.1"/>
    <property type="molecule type" value="Genomic_DNA"/>
</dbReference>
<dbReference type="EMBL" id="AP008212">
    <property type="protein sequence ID" value="BAF19702.2"/>
    <property type="status" value="ALT_SEQ"/>
    <property type="molecule type" value="Genomic_DNA"/>
</dbReference>
<dbReference type="EMBL" id="AP014962">
    <property type="status" value="NOT_ANNOTATED_CDS"/>
    <property type="molecule type" value="Genomic_DNA"/>
</dbReference>
<dbReference type="EMBL" id="CM000143">
    <property type="protein sequence ID" value="EAZ37236.1"/>
    <property type="status" value="ALT_SEQ"/>
    <property type="molecule type" value="Genomic_DNA"/>
</dbReference>
<dbReference type="SMR" id="Q0DBS1"/>
<dbReference type="FunCoup" id="Q0DBS1">
    <property type="interactions" value="1824"/>
</dbReference>
<dbReference type="STRING" id="39947.Q0DBS1"/>
<dbReference type="PaxDb" id="39947-Q0DBS1"/>
<dbReference type="KEGG" id="dosa:Os06g0535100"/>
<dbReference type="eggNOG" id="KOG0342">
    <property type="taxonomic scope" value="Eukaryota"/>
</dbReference>
<dbReference type="HOGENOM" id="CLU_003041_26_5_1"/>
<dbReference type="InParanoid" id="Q0DBS1"/>
<dbReference type="Proteomes" id="UP000000763">
    <property type="component" value="Chromosome 6"/>
</dbReference>
<dbReference type="Proteomes" id="UP000007752">
    <property type="component" value="Chromosome 6"/>
</dbReference>
<dbReference type="Proteomes" id="UP000059680">
    <property type="component" value="Chromosome 6"/>
</dbReference>
<dbReference type="GO" id="GO:0005730">
    <property type="term" value="C:nucleolus"/>
    <property type="evidence" value="ECO:0000318"/>
    <property type="project" value="GO_Central"/>
</dbReference>
<dbReference type="GO" id="GO:0005524">
    <property type="term" value="F:ATP binding"/>
    <property type="evidence" value="ECO:0007669"/>
    <property type="project" value="UniProtKB-KW"/>
</dbReference>
<dbReference type="GO" id="GO:0016887">
    <property type="term" value="F:ATP hydrolysis activity"/>
    <property type="evidence" value="ECO:0007669"/>
    <property type="project" value="RHEA"/>
</dbReference>
<dbReference type="GO" id="GO:0003723">
    <property type="term" value="F:RNA binding"/>
    <property type="evidence" value="ECO:0007669"/>
    <property type="project" value="UniProtKB-KW"/>
</dbReference>
<dbReference type="GO" id="GO:0003724">
    <property type="term" value="F:RNA helicase activity"/>
    <property type="evidence" value="ECO:0007669"/>
    <property type="project" value="UniProtKB-EC"/>
</dbReference>
<dbReference type="GO" id="GO:0000463">
    <property type="term" value="P:maturation of LSU-rRNA from tricistronic rRNA transcript (SSU-rRNA, 5.8S rRNA, LSU-rRNA)"/>
    <property type="evidence" value="ECO:0000318"/>
    <property type="project" value="GO_Central"/>
</dbReference>
<dbReference type="CDD" id="cd17942">
    <property type="entry name" value="DEADc_DDX18"/>
    <property type="match status" value="1"/>
</dbReference>
<dbReference type="CDD" id="cd18787">
    <property type="entry name" value="SF2_C_DEAD"/>
    <property type="match status" value="1"/>
</dbReference>
<dbReference type="FunFam" id="3.40.50.300:FF:000379">
    <property type="entry name" value="RNA helicase"/>
    <property type="match status" value="1"/>
</dbReference>
<dbReference type="Gene3D" id="3.40.50.300">
    <property type="entry name" value="P-loop containing nucleotide triphosphate hydrolases"/>
    <property type="match status" value="2"/>
</dbReference>
<dbReference type="InterPro" id="IPR044773">
    <property type="entry name" value="DDX18/Has1_DEADc"/>
</dbReference>
<dbReference type="InterPro" id="IPR011545">
    <property type="entry name" value="DEAD/DEAH_box_helicase_dom"/>
</dbReference>
<dbReference type="InterPro" id="IPR014001">
    <property type="entry name" value="Helicase_ATP-bd"/>
</dbReference>
<dbReference type="InterPro" id="IPR001650">
    <property type="entry name" value="Helicase_C-like"/>
</dbReference>
<dbReference type="InterPro" id="IPR027417">
    <property type="entry name" value="P-loop_NTPase"/>
</dbReference>
<dbReference type="InterPro" id="IPR000629">
    <property type="entry name" value="RNA-helicase_DEAD-box_CS"/>
</dbReference>
<dbReference type="InterPro" id="IPR014014">
    <property type="entry name" value="RNA_helicase_DEAD_Q_motif"/>
</dbReference>
<dbReference type="InterPro" id="IPR025313">
    <property type="entry name" value="SPB4-like_CTE"/>
</dbReference>
<dbReference type="PANTHER" id="PTHR24031">
    <property type="entry name" value="RNA HELICASE"/>
    <property type="match status" value="1"/>
</dbReference>
<dbReference type="Pfam" id="PF13959">
    <property type="entry name" value="CTE_SPB4"/>
    <property type="match status" value="1"/>
</dbReference>
<dbReference type="Pfam" id="PF00270">
    <property type="entry name" value="DEAD"/>
    <property type="match status" value="1"/>
</dbReference>
<dbReference type="Pfam" id="PF00271">
    <property type="entry name" value="Helicase_C"/>
    <property type="match status" value="1"/>
</dbReference>
<dbReference type="SMART" id="SM00487">
    <property type="entry name" value="DEXDc"/>
    <property type="match status" value="1"/>
</dbReference>
<dbReference type="SMART" id="SM01178">
    <property type="entry name" value="DUF4217"/>
    <property type="match status" value="1"/>
</dbReference>
<dbReference type="SMART" id="SM00490">
    <property type="entry name" value="HELICc"/>
    <property type="match status" value="1"/>
</dbReference>
<dbReference type="SUPFAM" id="SSF52540">
    <property type="entry name" value="P-loop containing nucleoside triphosphate hydrolases"/>
    <property type="match status" value="1"/>
</dbReference>
<dbReference type="PROSITE" id="PS00039">
    <property type="entry name" value="DEAD_ATP_HELICASE"/>
    <property type="match status" value="1"/>
</dbReference>
<dbReference type="PROSITE" id="PS51192">
    <property type="entry name" value="HELICASE_ATP_BIND_1"/>
    <property type="match status" value="1"/>
</dbReference>
<dbReference type="PROSITE" id="PS51194">
    <property type="entry name" value="HELICASE_CTER"/>
    <property type="match status" value="1"/>
</dbReference>
<dbReference type="PROSITE" id="PS51195">
    <property type="entry name" value="Q_MOTIF"/>
    <property type="match status" value="1"/>
</dbReference>
<protein>
    <recommendedName>
        <fullName>Putative DEAD-box ATP-dependent RNA helicase 51</fullName>
        <ecNumber>3.6.4.13</ecNumber>
    </recommendedName>
</protein>
<reference key="1">
    <citation type="journal article" date="2005" name="Nature">
        <title>The map-based sequence of the rice genome.</title>
        <authorList>
            <consortium name="International rice genome sequencing project (IRGSP)"/>
        </authorList>
    </citation>
    <scope>NUCLEOTIDE SEQUENCE [LARGE SCALE GENOMIC DNA]</scope>
    <source>
        <strain>cv. Nipponbare</strain>
    </source>
</reference>
<reference key="2">
    <citation type="journal article" date="2008" name="Nucleic Acids Res.">
        <title>The rice annotation project database (RAP-DB): 2008 update.</title>
        <authorList>
            <consortium name="The rice annotation project (RAP)"/>
        </authorList>
    </citation>
    <scope>GENOME REANNOTATION</scope>
    <source>
        <strain>cv. Nipponbare</strain>
    </source>
</reference>
<reference key="3">
    <citation type="journal article" date="2013" name="Rice">
        <title>Improvement of the Oryza sativa Nipponbare reference genome using next generation sequence and optical map data.</title>
        <authorList>
            <person name="Kawahara Y."/>
            <person name="de la Bastide M."/>
            <person name="Hamilton J.P."/>
            <person name="Kanamori H."/>
            <person name="McCombie W.R."/>
            <person name="Ouyang S."/>
            <person name="Schwartz D.C."/>
            <person name="Tanaka T."/>
            <person name="Wu J."/>
            <person name="Zhou S."/>
            <person name="Childs K.L."/>
            <person name="Davidson R.M."/>
            <person name="Lin H."/>
            <person name="Quesada-Ocampo L."/>
            <person name="Vaillancourt B."/>
            <person name="Sakai H."/>
            <person name="Lee S.S."/>
            <person name="Kim J."/>
            <person name="Numa H."/>
            <person name="Itoh T."/>
            <person name="Buell C.R."/>
            <person name="Matsumoto T."/>
        </authorList>
    </citation>
    <scope>GENOME REANNOTATION</scope>
    <source>
        <strain>cv. Nipponbare</strain>
    </source>
</reference>
<reference key="4">
    <citation type="journal article" date="2005" name="PLoS Biol.">
        <title>The genomes of Oryza sativa: a history of duplications.</title>
        <authorList>
            <person name="Yu J."/>
            <person name="Wang J."/>
            <person name="Lin W."/>
            <person name="Li S."/>
            <person name="Li H."/>
            <person name="Zhou J."/>
            <person name="Ni P."/>
            <person name="Dong W."/>
            <person name="Hu S."/>
            <person name="Zeng C."/>
            <person name="Zhang J."/>
            <person name="Zhang Y."/>
            <person name="Li R."/>
            <person name="Xu Z."/>
            <person name="Li S."/>
            <person name="Li X."/>
            <person name="Zheng H."/>
            <person name="Cong L."/>
            <person name="Lin L."/>
            <person name="Yin J."/>
            <person name="Geng J."/>
            <person name="Li G."/>
            <person name="Shi J."/>
            <person name="Liu J."/>
            <person name="Lv H."/>
            <person name="Li J."/>
            <person name="Wang J."/>
            <person name="Deng Y."/>
            <person name="Ran L."/>
            <person name="Shi X."/>
            <person name="Wang X."/>
            <person name="Wu Q."/>
            <person name="Li C."/>
            <person name="Ren X."/>
            <person name="Wang J."/>
            <person name="Wang X."/>
            <person name="Li D."/>
            <person name="Liu D."/>
            <person name="Zhang X."/>
            <person name="Ji Z."/>
            <person name="Zhao W."/>
            <person name="Sun Y."/>
            <person name="Zhang Z."/>
            <person name="Bao J."/>
            <person name="Han Y."/>
            <person name="Dong L."/>
            <person name="Ji J."/>
            <person name="Chen P."/>
            <person name="Wu S."/>
            <person name="Liu J."/>
            <person name="Xiao Y."/>
            <person name="Bu D."/>
            <person name="Tan J."/>
            <person name="Yang L."/>
            <person name="Ye C."/>
            <person name="Zhang J."/>
            <person name="Xu J."/>
            <person name="Zhou Y."/>
            <person name="Yu Y."/>
            <person name="Zhang B."/>
            <person name="Zhuang S."/>
            <person name="Wei H."/>
            <person name="Liu B."/>
            <person name="Lei M."/>
            <person name="Yu H."/>
            <person name="Li Y."/>
            <person name="Xu H."/>
            <person name="Wei S."/>
            <person name="He X."/>
            <person name="Fang L."/>
            <person name="Zhang Z."/>
            <person name="Zhang Y."/>
            <person name="Huang X."/>
            <person name="Su Z."/>
            <person name="Tong W."/>
            <person name="Li J."/>
            <person name="Tong Z."/>
            <person name="Li S."/>
            <person name="Ye J."/>
            <person name="Wang L."/>
            <person name="Fang L."/>
            <person name="Lei T."/>
            <person name="Chen C.-S."/>
            <person name="Chen H.-C."/>
            <person name="Xu Z."/>
            <person name="Li H."/>
            <person name="Huang H."/>
            <person name="Zhang F."/>
            <person name="Xu H."/>
            <person name="Li N."/>
            <person name="Zhao C."/>
            <person name="Li S."/>
            <person name="Dong L."/>
            <person name="Huang Y."/>
            <person name="Li L."/>
            <person name="Xi Y."/>
            <person name="Qi Q."/>
            <person name="Li W."/>
            <person name="Zhang B."/>
            <person name="Hu W."/>
            <person name="Zhang Y."/>
            <person name="Tian X."/>
            <person name="Jiao Y."/>
            <person name="Liang X."/>
            <person name="Jin J."/>
            <person name="Gao L."/>
            <person name="Zheng W."/>
            <person name="Hao B."/>
            <person name="Liu S.-M."/>
            <person name="Wang W."/>
            <person name="Yuan L."/>
            <person name="Cao M."/>
            <person name="McDermott J."/>
            <person name="Samudrala R."/>
            <person name="Wang J."/>
            <person name="Wong G.K.-S."/>
            <person name="Yang H."/>
        </authorList>
    </citation>
    <scope>NUCLEOTIDE SEQUENCE [LARGE SCALE GENOMIC DNA]</scope>
    <source>
        <strain>cv. Nipponbare</strain>
    </source>
</reference>
<gene>
    <name type="ordered locus">Os06g0535100</name>
    <name type="ordered locus">LOC_Os06g34420</name>
    <name type="ORF">OsJ_21574</name>
    <name type="ORF">OSJNBa0001B21.18</name>
</gene>
<comment type="catalytic activity">
    <reaction>
        <text>ATP + H2O = ADP + phosphate + H(+)</text>
        <dbReference type="Rhea" id="RHEA:13065"/>
        <dbReference type="ChEBI" id="CHEBI:15377"/>
        <dbReference type="ChEBI" id="CHEBI:15378"/>
        <dbReference type="ChEBI" id="CHEBI:30616"/>
        <dbReference type="ChEBI" id="CHEBI:43474"/>
        <dbReference type="ChEBI" id="CHEBI:456216"/>
        <dbReference type="EC" id="3.6.4.13"/>
    </reaction>
</comment>
<comment type="domain">
    <text>The Q motif is unique to and characteristic of the DEAD box family of RNA helicases and controls ATP binding and hydrolysis.</text>
</comment>
<comment type="similarity">
    <text evidence="4">Belongs to the DEAD box helicase family. DDX18/HAS1 subfamily.</text>
</comment>
<comment type="sequence caution" evidence="4">
    <conflict type="erroneous gene model prediction">
        <sequence resource="EMBL-CDS" id="BAF19702"/>
    </conflict>
</comment>
<comment type="sequence caution" evidence="4">
    <conflict type="erroneous gene model prediction">
        <sequence resource="EMBL-CDS" id="EAZ37236"/>
    </conflict>
</comment>